<evidence type="ECO:0000250" key="1"/>
<evidence type="ECO:0000255" key="2">
    <source>
        <dbReference type="HAMAP-Rule" id="MF_01350"/>
    </source>
</evidence>
<evidence type="ECO:0000269" key="3">
    <source>
    </source>
</evidence>
<evidence type="ECO:0000303" key="4">
    <source>
    </source>
</evidence>
<evidence type="ECO:0000305" key="5">
    <source>
    </source>
</evidence>
<evidence type="ECO:0007829" key="6">
    <source>
        <dbReference type="PDB" id="8QBY"/>
    </source>
</evidence>
<sequence>MAEFWASPYGFALSMLLQGLAVIAFVMGSLIFMVYGDRKIWAAVQMRRGPNVVGPWGLLQTFADALKYIVKEIVIPAGADKFVYFLAPFLSMMLALFAFVVIPFDEGWVMANINVGILFIFAASSLEVYGVIMGGWASNSKYPFLASLRSAAQMISYEVSLGLIIIGIIISTGSMNLTAIVEAQRGDYGLLNWYWLPHLPMVVLFFVSALAECNRPPFDLVEAESELVAGFMTEYSSTPYLLFMAGEYIAMYLMCALLSLLFFGGWLSPVPFIADGWWWMVIKMWFWFYMFAMVKAIVPRYRYDQLMRIGWKVFLPLSLGWVVLVAILARYEILGGFWARFAVGG</sequence>
<organism>
    <name type="scientific">Paracoccus denitrificans (strain Pd 1222)</name>
    <dbReference type="NCBI Taxonomy" id="318586"/>
    <lineage>
        <taxon>Bacteria</taxon>
        <taxon>Pseudomonadati</taxon>
        <taxon>Pseudomonadota</taxon>
        <taxon>Alphaproteobacteria</taxon>
        <taxon>Rhodobacterales</taxon>
        <taxon>Paracoccaceae</taxon>
        <taxon>Paracoccus</taxon>
    </lineage>
</organism>
<dbReference type="EC" id="7.1.1.-" evidence="2"/>
<dbReference type="EMBL" id="CP000489">
    <property type="protein sequence ID" value="ABL70331.1"/>
    <property type="molecule type" value="Genomic_DNA"/>
</dbReference>
<dbReference type="RefSeq" id="WP_011748525.1">
    <property type="nucleotide sequence ID" value="NC_008686.1"/>
</dbReference>
<dbReference type="PDB" id="8QBY">
    <property type="method" value="EM"/>
    <property type="resolution" value="2.30 A"/>
    <property type="chains" value="H=1-345"/>
</dbReference>
<dbReference type="PDBsum" id="8QBY"/>
<dbReference type="EMDB" id="EMD-18324"/>
<dbReference type="SMR" id="A1B487"/>
<dbReference type="STRING" id="318586.Pden_2239"/>
<dbReference type="EnsemblBacteria" id="ABL70331">
    <property type="protein sequence ID" value="ABL70331"/>
    <property type="gene ID" value="Pden_2239"/>
</dbReference>
<dbReference type="GeneID" id="93450638"/>
<dbReference type="KEGG" id="pde:Pden_2239"/>
<dbReference type="eggNOG" id="COG1005">
    <property type="taxonomic scope" value="Bacteria"/>
</dbReference>
<dbReference type="HOGENOM" id="CLU_015134_0_1_5"/>
<dbReference type="OrthoDB" id="9803734at2"/>
<dbReference type="Proteomes" id="UP000000361">
    <property type="component" value="Chromosome 1"/>
</dbReference>
<dbReference type="GO" id="GO:0005886">
    <property type="term" value="C:plasma membrane"/>
    <property type="evidence" value="ECO:0007669"/>
    <property type="project" value="UniProtKB-SubCell"/>
</dbReference>
<dbReference type="GO" id="GO:0003954">
    <property type="term" value="F:NADH dehydrogenase activity"/>
    <property type="evidence" value="ECO:0007669"/>
    <property type="project" value="TreeGrafter"/>
</dbReference>
<dbReference type="GO" id="GO:0016655">
    <property type="term" value="F:oxidoreductase activity, acting on NAD(P)H, quinone or similar compound as acceptor"/>
    <property type="evidence" value="ECO:0007669"/>
    <property type="project" value="UniProtKB-UniRule"/>
</dbReference>
<dbReference type="GO" id="GO:0048038">
    <property type="term" value="F:quinone binding"/>
    <property type="evidence" value="ECO:0007669"/>
    <property type="project" value="UniProtKB-KW"/>
</dbReference>
<dbReference type="GO" id="GO:0009060">
    <property type="term" value="P:aerobic respiration"/>
    <property type="evidence" value="ECO:0007669"/>
    <property type="project" value="TreeGrafter"/>
</dbReference>
<dbReference type="HAMAP" id="MF_01350">
    <property type="entry name" value="NDH1_NuoH"/>
    <property type="match status" value="1"/>
</dbReference>
<dbReference type="InterPro" id="IPR001694">
    <property type="entry name" value="NADH_UbQ_OxRdtase_su1/FPO"/>
</dbReference>
<dbReference type="InterPro" id="IPR018086">
    <property type="entry name" value="NADH_UbQ_OxRdtase_su1_CS"/>
</dbReference>
<dbReference type="NCBIfam" id="NF004741">
    <property type="entry name" value="PRK06076.1-2"/>
    <property type="match status" value="1"/>
</dbReference>
<dbReference type="NCBIfam" id="NF004745">
    <property type="entry name" value="PRK06076.1-6"/>
    <property type="match status" value="1"/>
</dbReference>
<dbReference type="PANTHER" id="PTHR11432">
    <property type="entry name" value="NADH DEHYDROGENASE SUBUNIT 1"/>
    <property type="match status" value="1"/>
</dbReference>
<dbReference type="PANTHER" id="PTHR11432:SF3">
    <property type="entry name" value="NADH-UBIQUINONE OXIDOREDUCTASE CHAIN 1"/>
    <property type="match status" value="1"/>
</dbReference>
<dbReference type="Pfam" id="PF00146">
    <property type="entry name" value="NADHdh"/>
    <property type="match status" value="1"/>
</dbReference>
<dbReference type="PROSITE" id="PS00667">
    <property type="entry name" value="COMPLEX1_ND1_1"/>
    <property type="match status" value="1"/>
</dbReference>
<dbReference type="PROSITE" id="PS00668">
    <property type="entry name" value="COMPLEX1_ND1_2"/>
    <property type="match status" value="1"/>
</dbReference>
<proteinExistence type="evidence at protein level"/>
<feature type="chain" id="PRO_0000298835" description="NADH-quinone oxidoreductase subunit H">
    <location>
        <begin position="1"/>
        <end position="345"/>
    </location>
</feature>
<feature type="transmembrane region" description="Helical" evidence="2">
    <location>
        <begin position="15"/>
        <end position="35"/>
    </location>
</feature>
<feature type="transmembrane region" description="Helical" evidence="2">
    <location>
        <begin position="82"/>
        <end position="102"/>
    </location>
</feature>
<feature type="transmembrane region" description="Helical" evidence="2">
    <location>
        <begin position="115"/>
        <end position="135"/>
    </location>
</feature>
<feature type="transmembrane region" description="Helical" evidence="2">
    <location>
        <begin position="161"/>
        <end position="181"/>
    </location>
</feature>
<feature type="transmembrane region" description="Helical" evidence="2">
    <location>
        <begin position="190"/>
        <end position="210"/>
    </location>
</feature>
<feature type="transmembrane region" description="Helical" evidence="2">
    <location>
        <begin position="240"/>
        <end position="262"/>
    </location>
</feature>
<feature type="transmembrane region" description="Helical" evidence="2">
    <location>
        <begin position="278"/>
        <end position="298"/>
    </location>
</feature>
<feature type="transmembrane region" description="Helical" evidence="2">
    <location>
        <begin position="309"/>
        <end position="329"/>
    </location>
</feature>
<feature type="helix" evidence="6">
    <location>
        <begin position="2"/>
        <end position="5"/>
    </location>
</feature>
<feature type="helix" evidence="6">
    <location>
        <begin position="8"/>
        <end position="44"/>
    </location>
</feature>
<feature type="turn" evidence="6">
    <location>
        <begin position="52"/>
        <end position="54"/>
    </location>
</feature>
<feature type="helix" evidence="6">
    <location>
        <begin position="55"/>
        <end position="57"/>
    </location>
</feature>
<feature type="helix" evidence="6">
    <location>
        <begin position="60"/>
        <end position="69"/>
    </location>
</feature>
<feature type="helix" evidence="6">
    <location>
        <begin position="81"/>
        <end position="97"/>
    </location>
</feature>
<feature type="helix" evidence="6">
    <location>
        <begin position="98"/>
        <end position="101"/>
    </location>
</feature>
<feature type="helix" evidence="6">
    <location>
        <begin position="116"/>
        <end position="138"/>
    </location>
</feature>
<feature type="helix" evidence="6">
    <location>
        <begin position="141"/>
        <end position="158"/>
    </location>
</feature>
<feature type="helix" evidence="6">
    <location>
        <begin position="161"/>
        <end position="172"/>
    </location>
</feature>
<feature type="helix" evidence="6">
    <location>
        <begin position="177"/>
        <end position="182"/>
    </location>
</feature>
<feature type="helix" evidence="6">
    <location>
        <begin position="189"/>
        <end position="192"/>
    </location>
</feature>
<feature type="turn" evidence="6">
    <location>
        <begin position="194"/>
        <end position="198"/>
    </location>
</feature>
<feature type="helix" evidence="6">
    <location>
        <begin position="199"/>
        <end position="212"/>
    </location>
</feature>
<feature type="turn" evidence="6">
    <location>
        <begin position="220"/>
        <end position="222"/>
    </location>
</feature>
<feature type="turn" evidence="6">
    <location>
        <begin position="224"/>
        <end position="226"/>
    </location>
</feature>
<feature type="strand" evidence="6">
    <location>
        <begin position="227"/>
        <end position="229"/>
    </location>
</feature>
<feature type="helix" evidence="6">
    <location>
        <begin position="230"/>
        <end position="232"/>
    </location>
</feature>
<feature type="helix" evidence="6">
    <location>
        <begin position="237"/>
        <end position="262"/>
    </location>
</feature>
<feature type="helix" evidence="6">
    <location>
        <begin position="277"/>
        <end position="297"/>
    </location>
</feature>
<feature type="helix" evidence="6">
    <location>
        <begin position="303"/>
        <end position="312"/>
    </location>
</feature>
<feature type="helix" evidence="6">
    <location>
        <begin position="314"/>
        <end position="330"/>
    </location>
</feature>
<feature type="turn" evidence="6">
    <location>
        <begin position="331"/>
        <end position="337"/>
    </location>
</feature>
<gene>
    <name evidence="2" type="primary">nuoH</name>
    <name evidence="4" type="synonym">nqo8</name>
    <name type="ordered locus">Pden_2239</name>
</gene>
<comment type="function">
    <text evidence="2 5">NDH-1 shuttles electrons from NADH, via FMN and iron-sulfur (Fe-S) centers, to quinones in the respiratory chain. The immediate electron acceptor for the enzyme in this species is believed to be ubiquinone. Couples the redox reaction to proton translocation (for every two electrons transferred, four hydrogen ions are translocated across the cytoplasmic membrane), and thus conserves the redox energy in a proton gradient. This subunit may bind ubiquinone.</text>
</comment>
<comment type="catalytic activity">
    <reaction evidence="2">
        <text>a quinone + NADH + 5 H(+)(in) = a quinol + NAD(+) + 4 H(+)(out)</text>
        <dbReference type="Rhea" id="RHEA:57888"/>
        <dbReference type="ChEBI" id="CHEBI:15378"/>
        <dbReference type="ChEBI" id="CHEBI:24646"/>
        <dbReference type="ChEBI" id="CHEBI:57540"/>
        <dbReference type="ChEBI" id="CHEBI:57945"/>
        <dbReference type="ChEBI" id="CHEBI:132124"/>
    </reaction>
</comment>
<comment type="subunit">
    <text evidence="1 3">NDH-1 is composed of at least 14 different subunits, Nqo1 to Nqo14. The complex has a L-shaped structure, with the hydrophobic arm (subunits Nqo7, Nqo8, Nqo10 to Nqo14) embedded in the inner membrane and the hydrophilic peripheral arm (subunits Nqo1 to Nqo6, Nqo9) protruding into the bacterial cytoplasm. The hydrophilic domain contains all the redox centers (By similarity). NADH-quinone oxidoreductase forms a supercomplex with ubiquinol-cytochrome c reductase complex (complex III or cytochrome b-c1 complex) and cytochrome c oxidase (complex IV), which stabilizes the NADH-quinone oxidoreductase complex (PubMed:14610094).</text>
</comment>
<comment type="subcellular location">
    <subcellularLocation>
        <location evidence="5">Cell inner membrane</location>
        <topology evidence="5">Multi-pass membrane protein</topology>
    </subcellularLocation>
</comment>
<comment type="similarity">
    <text evidence="2">Belongs to the complex I subunit 1 family.</text>
</comment>
<reference key="1">
    <citation type="submission" date="2006-12" db="EMBL/GenBank/DDBJ databases">
        <title>Complete sequence of chromosome 1 of Paracoccus denitrificans PD1222.</title>
        <authorList>
            <person name="Copeland A."/>
            <person name="Lucas S."/>
            <person name="Lapidus A."/>
            <person name="Barry K."/>
            <person name="Detter J.C."/>
            <person name="Glavina del Rio T."/>
            <person name="Hammon N."/>
            <person name="Israni S."/>
            <person name="Dalin E."/>
            <person name="Tice H."/>
            <person name="Pitluck S."/>
            <person name="Munk A.C."/>
            <person name="Brettin T."/>
            <person name="Bruce D."/>
            <person name="Han C."/>
            <person name="Tapia R."/>
            <person name="Gilna P."/>
            <person name="Schmutz J."/>
            <person name="Larimer F."/>
            <person name="Land M."/>
            <person name="Hauser L."/>
            <person name="Kyrpides N."/>
            <person name="Lykidis A."/>
            <person name="Spiro S."/>
            <person name="Richardson D.J."/>
            <person name="Moir J.W.B."/>
            <person name="Ferguson S.J."/>
            <person name="van Spanning R.J.M."/>
            <person name="Richardson P."/>
        </authorList>
    </citation>
    <scope>NUCLEOTIDE SEQUENCE [LARGE SCALE GENOMIC DNA]</scope>
    <source>
        <strain>Pd 1222</strain>
    </source>
</reference>
<reference key="2">
    <citation type="journal article" date="2004" name="J. Biol. Chem.">
        <title>Assembly of respiratory complexes I, III, and IV into NADH oxidase supercomplex stabilizes complex I in Paracoccus denitrificans.</title>
        <authorList>
            <person name="Stroh A."/>
            <person name="Anderka O."/>
            <person name="Pfeiffer K."/>
            <person name="Yagi T."/>
            <person name="Finel M."/>
            <person name="Ludwig B."/>
            <person name="Schagger H."/>
        </authorList>
    </citation>
    <scope>IDENTIFICATION IN NADH OXIDASE SUPERCOMPLEX</scope>
    <scope>FUNCTION</scope>
    <scope>SUBUNIT</scope>
    <scope>SUBCELLULAR LOCATION</scope>
</reference>
<accession>A1B487</accession>
<keyword id="KW-0002">3D-structure</keyword>
<keyword id="KW-0997">Cell inner membrane</keyword>
<keyword id="KW-1003">Cell membrane</keyword>
<keyword id="KW-0472">Membrane</keyword>
<keyword id="KW-0520">NAD</keyword>
<keyword id="KW-0874">Quinone</keyword>
<keyword id="KW-1185">Reference proteome</keyword>
<keyword id="KW-1278">Translocase</keyword>
<keyword id="KW-0812">Transmembrane</keyword>
<keyword id="KW-1133">Transmembrane helix</keyword>
<keyword id="KW-0830">Ubiquinone</keyword>
<protein>
    <recommendedName>
        <fullName evidence="2">NADH-quinone oxidoreductase subunit H</fullName>
        <ecNumber evidence="2">7.1.1.-</ecNumber>
    </recommendedName>
    <alternativeName>
        <fullName>NADH dehydrogenase I subunit 8</fullName>
    </alternativeName>
    <alternativeName>
        <fullName evidence="2">NADH dehydrogenase I subunit H</fullName>
    </alternativeName>
    <alternativeName>
        <fullName>NADH-quinone oxidoreductase subunit 8</fullName>
        <shortName>NQO8</shortName>
    </alternativeName>
    <alternativeName>
        <fullName>NDH-1 subunit 8</fullName>
    </alternativeName>
    <alternativeName>
        <fullName evidence="2">NDH-1 subunit H</fullName>
    </alternativeName>
</protein>
<name>NUOH_PARDP</name>